<evidence type="ECO:0000255" key="1">
    <source>
        <dbReference type="HAMAP-Rule" id="MF_02004"/>
    </source>
</evidence>
<organism>
    <name type="scientific">Escherichia coli O6:H1 (strain CFT073 / ATCC 700928 / UPEC)</name>
    <dbReference type="NCBI Taxonomy" id="199310"/>
    <lineage>
        <taxon>Bacteria</taxon>
        <taxon>Pseudomonadati</taxon>
        <taxon>Pseudomonadota</taxon>
        <taxon>Gammaproteobacteria</taxon>
        <taxon>Enterobacterales</taxon>
        <taxon>Enterobacteriaceae</taxon>
        <taxon>Escherichia</taxon>
    </lineage>
</organism>
<sequence>MEKTYNPQDIEQPLYEHWEKQGYFKPNGDESQESFCIMIPPPNVTGSLHMGHAFQQTIMDTMIRYQRMQGKNTLWQVGTDHAGIATQMVVERKIAAEEGKTRHDYGREAFIDKIWEWKAESGGTITRQMRRLGNSVDWERERFTMDEGLSNAVKEVFVRLYKEDLIYRGKRLVNWDPKLRTAISDLEVENRESKGSMWHIRYPLADGAKTADGKDYLVVATTRPETLLGDTGVAVNPEDPRYKDLIGKYVILPLVNRRIPIVGDEHADMEKGTGCVKITPAHDFNDYEVGKRHALPMINILTFDGDIRESAQVFDTKGNESDIYSSEIPAEFQKLERFAARKAVVAAVDALGLLEEIKPHDLTVPYGDRGGVVIEPMLTDQWYVRADVLAKPAVEAVENGDIQFVPKQYENMYFSWMRDIQDWCISRQLWWGHRIPAWYDEAGNVYVGRNEDEVRKENNLGADVALRQDEDVLDTWFSSALWTFSTLGWPENTDALRQFHPTSVMVSGFDIIFFWIARMIMMTMHFIKDENGKPQVPFHTVYMTGLIRDDEGQKMSKSKGNVIDPLDMVDGISLPELLEKRTGNMMQPQLADKIRKRTEKQFPNGIEPHGTDALRFTLAALASTGRDINWDMKRLEGYRNFCNKLWNASRFVLMNTEGQDCGFNGGEMTLSLADRWILAEFNQTIKAYREALDSFRFDIAAGILYEFTWNQFCDWYLELTKPVMNGGTEAELRGTRHTLVTVLEGLLRLAHPIIPFITETIWQRVKVLCGITADTIMLQPFPQYDASQVDEAALADTEWLKQAIVAVRNIRAEMNIAPGKPLELLLRGCSADAERRVNENRGFLQTLARLESITVLPADDKGPVSVTKIVDGAELLIPMAGLINKEDELARLAKEVAKIEGEISRIENKLANEGFVARAPEAVIAKEREKLEGYAEAKAKLIEQQAVIAAL</sequence>
<dbReference type="EC" id="6.1.1.9" evidence="1"/>
<dbReference type="EMBL" id="AE014075">
    <property type="protein sequence ID" value="AAN83780.1"/>
    <property type="molecule type" value="Genomic_DNA"/>
</dbReference>
<dbReference type="RefSeq" id="WP_000416368.1">
    <property type="nucleotide sequence ID" value="NZ_CP051263.1"/>
</dbReference>
<dbReference type="SMR" id="Q8FAD1"/>
<dbReference type="STRING" id="199310.c5358"/>
<dbReference type="KEGG" id="ecc:c5358"/>
<dbReference type="eggNOG" id="COG0525">
    <property type="taxonomic scope" value="Bacteria"/>
</dbReference>
<dbReference type="HOGENOM" id="CLU_001493_0_2_6"/>
<dbReference type="BioCyc" id="ECOL199310:C5358-MONOMER"/>
<dbReference type="Proteomes" id="UP000001410">
    <property type="component" value="Chromosome"/>
</dbReference>
<dbReference type="GO" id="GO:0005829">
    <property type="term" value="C:cytosol"/>
    <property type="evidence" value="ECO:0007669"/>
    <property type="project" value="TreeGrafter"/>
</dbReference>
<dbReference type="GO" id="GO:0002161">
    <property type="term" value="F:aminoacyl-tRNA deacylase activity"/>
    <property type="evidence" value="ECO:0007669"/>
    <property type="project" value="InterPro"/>
</dbReference>
<dbReference type="GO" id="GO:0005524">
    <property type="term" value="F:ATP binding"/>
    <property type="evidence" value="ECO:0007669"/>
    <property type="project" value="UniProtKB-UniRule"/>
</dbReference>
<dbReference type="GO" id="GO:0004832">
    <property type="term" value="F:valine-tRNA ligase activity"/>
    <property type="evidence" value="ECO:0007669"/>
    <property type="project" value="UniProtKB-UniRule"/>
</dbReference>
<dbReference type="GO" id="GO:0006438">
    <property type="term" value="P:valyl-tRNA aminoacylation"/>
    <property type="evidence" value="ECO:0007669"/>
    <property type="project" value="UniProtKB-UniRule"/>
</dbReference>
<dbReference type="CDD" id="cd07962">
    <property type="entry name" value="Anticodon_Ia_Val"/>
    <property type="match status" value="1"/>
</dbReference>
<dbReference type="CDD" id="cd00817">
    <property type="entry name" value="ValRS_core"/>
    <property type="match status" value="1"/>
</dbReference>
<dbReference type="FunFam" id="1.10.287.380:FF:000001">
    <property type="entry name" value="Valine--tRNA ligase"/>
    <property type="match status" value="1"/>
</dbReference>
<dbReference type="FunFam" id="1.10.730.10:FF:000007">
    <property type="entry name" value="Valine--tRNA ligase"/>
    <property type="match status" value="1"/>
</dbReference>
<dbReference type="FunFam" id="3.40.50.620:FF:000032">
    <property type="entry name" value="Valine--tRNA ligase"/>
    <property type="match status" value="1"/>
</dbReference>
<dbReference type="FunFam" id="3.40.50.620:FF:000146">
    <property type="entry name" value="Valine--tRNA ligase"/>
    <property type="match status" value="1"/>
</dbReference>
<dbReference type="FunFam" id="3.90.740.10:FF:000021">
    <property type="entry name" value="Valine--tRNA ligase"/>
    <property type="match status" value="1"/>
</dbReference>
<dbReference type="Gene3D" id="3.40.50.620">
    <property type="entry name" value="HUPs"/>
    <property type="match status" value="2"/>
</dbReference>
<dbReference type="Gene3D" id="1.10.730.10">
    <property type="entry name" value="Isoleucyl-tRNA Synthetase, Domain 1"/>
    <property type="match status" value="1"/>
</dbReference>
<dbReference type="Gene3D" id="1.10.287.380">
    <property type="entry name" value="Valyl-tRNA synthetase, C-terminal domain"/>
    <property type="match status" value="1"/>
</dbReference>
<dbReference type="Gene3D" id="3.90.740.10">
    <property type="entry name" value="Valyl/Leucyl/Isoleucyl-tRNA synthetase, editing domain"/>
    <property type="match status" value="2"/>
</dbReference>
<dbReference type="HAMAP" id="MF_02004">
    <property type="entry name" value="Val_tRNA_synth_type1"/>
    <property type="match status" value="1"/>
</dbReference>
<dbReference type="InterPro" id="IPR001412">
    <property type="entry name" value="aa-tRNA-synth_I_CS"/>
</dbReference>
<dbReference type="InterPro" id="IPR002300">
    <property type="entry name" value="aa-tRNA-synth_Ia"/>
</dbReference>
<dbReference type="InterPro" id="IPR033705">
    <property type="entry name" value="Anticodon_Ia_Val"/>
</dbReference>
<dbReference type="InterPro" id="IPR013155">
    <property type="entry name" value="M/V/L/I-tRNA-synth_anticd-bd"/>
</dbReference>
<dbReference type="InterPro" id="IPR014729">
    <property type="entry name" value="Rossmann-like_a/b/a_fold"/>
</dbReference>
<dbReference type="InterPro" id="IPR010978">
    <property type="entry name" value="tRNA-bd_arm"/>
</dbReference>
<dbReference type="InterPro" id="IPR009080">
    <property type="entry name" value="tRNAsynth_Ia_anticodon-bd"/>
</dbReference>
<dbReference type="InterPro" id="IPR037118">
    <property type="entry name" value="Val-tRNA_synth_C_sf"/>
</dbReference>
<dbReference type="InterPro" id="IPR019499">
    <property type="entry name" value="Val-tRNA_synth_tRNA-bd"/>
</dbReference>
<dbReference type="InterPro" id="IPR009008">
    <property type="entry name" value="Val/Leu/Ile-tRNA-synth_edit"/>
</dbReference>
<dbReference type="InterPro" id="IPR002303">
    <property type="entry name" value="Valyl-tRNA_ligase"/>
</dbReference>
<dbReference type="NCBIfam" id="NF004349">
    <property type="entry name" value="PRK05729.1"/>
    <property type="match status" value="1"/>
</dbReference>
<dbReference type="NCBIfam" id="TIGR00422">
    <property type="entry name" value="valS"/>
    <property type="match status" value="1"/>
</dbReference>
<dbReference type="PANTHER" id="PTHR11946:SF93">
    <property type="entry name" value="VALINE--TRNA LIGASE, CHLOROPLASTIC_MITOCHONDRIAL 2"/>
    <property type="match status" value="1"/>
</dbReference>
<dbReference type="PANTHER" id="PTHR11946">
    <property type="entry name" value="VALYL-TRNA SYNTHETASES"/>
    <property type="match status" value="1"/>
</dbReference>
<dbReference type="Pfam" id="PF08264">
    <property type="entry name" value="Anticodon_1"/>
    <property type="match status" value="1"/>
</dbReference>
<dbReference type="Pfam" id="PF00133">
    <property type="entry name" value="tRNA-synt_1"/>
    <property type="match status" value="1"/>
</dbReference>
<dbReference type="Pfam" id="PF10458">
    <property type="entry name" value="Val_tRNA-synt_C"/>
    <property type="match status" value="1"/>
</dbReference>
<dbReference type="PRINTS" id="PR00986">
    <property type="entry name" value="TRNASYNTHVAL"/>
</dbReference>
<dbReference type="SUPFAM" id="SSF47323">
    <property type="entry name" value="Anticodon-binding domain of a subclass of class I aminoacyl-tRNA synthetases"/>
    <property type="match status" value="1"/>
</dbReference>
<dbReference type="SUPFAM" id="SSF52374">
    <property type="entry name" value="Nucleotidylyl transferase"/>
    <property type="match status" value="1"/>
</dbReference>
<dbReference type="SUPFAM" id="SSF46589">
    <property type="entry name" value="tRNA-binding arm"/>
    <property type="match status" value="1"/>
</dbReference>
<dbReference type="SUPFAM" id="SSF50677">
    <property type="entry name" value="ValRS/IleRS/LeuRS editing domain"/>
    <property type="match status" value="1"/>
</dbReference>
<dbReference type="PROSITE" id="PS00178">
    <property type="entry name" value="AA_TRNA_LIGASE_I"/>
    <property type="match status" value="1"/>
</dbReference>
<reference key="1">
    <citation type="journal article" date="2002" name="Proc. Natl. Acad. Sci. U.S.A.">
        <title>Extensive mosaic structure revealed by the complete genome sequence of uropathogenic Escherichia coli.</title>
        <authorList>
            <person name="Welch R.A."/>
            <person name="Burland V."/>
            <person name="Plunkett G. III"/>
            <person name="Redford P."/>
            <person name="Roesch P."/>
            <person name="Rasko D."/>
            <person name="Buckles E.L."/>
            <person name="Liou S.-R."/>
            <person name="Boutin A."/>
            <person name="Hackett J."/>
            <person name="Stroud D."/>
            <person name="Mayhew G.F."/>
            <person name="Rose D.J."/>
            <person name="Zhou S."/>
            <person name="Schwartz D.C."/>
            <person name="Perna N.T."/>
            <person name="Mobley H.L.T."/>
            <person name="Donnenberg M.S."/>
            <person name="Blattner F.R."/>
        </authorList>
    </citation>
    <scope>NUCLEOTIDE SEQUENCE [LARGE SCALE GENOMIC DNA]</scope>
    <source>
        <strain>CFT073 / ATCC 700928 / UPEC</strain>
    </source>
</reference>
<protein>
    <recommendedName>
        <fullName evidence="1">Valine--tRNA ligase</fullName>
        <ecNumber evidence="1">6.1.1.9</ecNumber>
    </recommendedName>
    <alternativeName>
        <fullName evidence="1">Valyl-tRNA synthetase</fullName>
        <shortName evidence="1">ValRS</shortName>
    </alternativeName>
</protein>
<gene>
    <name evidence="1" type="primary">valS</name>
    <name type="ordered locus">c5358</name>
</gene>
<proteinExistence type="inferred from homology"/>
<accession>Q8FAD1</accession>
<name>SYV_ECOL6</name>
<keyword id="KW-0030">Aminoacyl-tRNA synthetase</keyword>
<keyword id="KW-0067">ATP-binding</keyword>
<keyword id="KW-0175">Coiled coil</keyword>
<keyword id="KW-0963">Cytoplasm</keyword>
<keyword id="KW-0436">Ligase</keyword>
<keyword id="KW-0547">Nucleotide-binding</keyword>
<keyword id="KW-0648">Protein biosynthesis</keyword>
<keyword id="KW-1185">Reference proteome</keyword>
<comment type="function">
    <text evidence="1">Catalyzes the attachment of valine to tRNA(Val). As ValRS can inadvertently accommodate and process structurally similar amino acids such as threonine, to avoid such errors, it has a 'posttransfer' editing activity that hydrolyzes mischarged Thr-tRNA(Val) in a tRNA-dependent manner.</text>
</comment>
<comment type="catalytic activity">
    <reaction evidence="1">
        <text>tRNA(Val) + L-valine + ATP = L-valyl-tRNA(Val) + AMP + diphosphate</text>
        <dbReference type="Rhea" id="RHEA:10704"/>
        <dbReference type="Rhea" id="RHEA-COMP:9672"/>
        <dbReference type="Rhea" id="RHEA-COMP:9708"/>
        <dbReference type="ChEBI" id="CHEBI:30616"/>
        <dbReference type="ChEBI" id="CHEBI:33019"/>
        <dbReference type="ChEBI" id="CHEBI:57762"/>
        <dbReference type="ChEBI" id="CHEBI:78442"/>
        <dbReference type="ChEBI" id="CHEBI:78537"/>
        <dbReference type="ChEBI" id="CHEBI:456215"/>
        <dbReference type="EC" id="6.1.1.9"/>
    </reaction>
</comment>
<comment type="subunit">
    <text evidence="1">Monomer.</text>
</comment>
<comment type="subcellular location">
    <subcellularLocation>
        <location evidence="1">Cytoplasm</location>
    </subcellularLocation>
</comment>
<comment type="domain">
    <text evidence="1">ValRS has two distinct active sites: one for aminoacylation and one for editing. The misactivated threonine is translocated from the active site to the editing site.</text>
</comment>
<comment type="domain">
    <text evidence="1">The C-terminal coiled-coil domain is crucial for aminoacylation activity.</text>
</comment>
<comment type="similarity">
    <text evidence="1">Belongs to the class-I aminoacyl-tRNA synthetase family. ValS type 1 subfamily.</text>
</comment>
<feature type="chain" id="PRO_0000224478" description="Valine--tRNA ligase">
    <location>
        <begin position="1"/>
        <end position="951"/>
    </location>
</feature>
<feature type="coiled-coil region" evidence="1">
    <location>
        <begin position="880"/>
        <end position="944"/>
    </location>
</feature>
<feature type="short sequence motif" description="'HIGH' region">
    <location>
        <begin position="42"/>
        <end position="52"/>
    </location>
</feature>
<feature type="short sequence motif" description="'KMSKS' region">
    <location>
        <begin position="554"/>
        <end position="558"/>
    </location>
</feature>
<feature type="binding site" evidence="1">
    <location>
        <position position="557"/>
    </location>
    <ligand>
        <name>ATP</name>
        <dbReference type="ChEBI" id="CHEBI:30616"/>
    </ligand>
</feature>